<evidence type="ECO:0000255" key="1">
    <source>
        <dbReference type="HAMAP-Rule" id="MF_00365"/>
    </source>
</evidence>
<feature type="chain" id="PRO_1000205494" description="DNA replication and repair protein RecF">
    <location>
        <begin position="1"/>
        <end position="364"/>
    </location>
</feature>
<feature type="binding site" evidence="1">
    <location>
        <begin position="30"/>
        <end position="37"/>
    </location>
    <ligand>
        <name>ATP</name>
        <dbReference type="ChEBI" id="CHEBI:30616"/>
    </ligand>
</feature>
<organism>
    <name type="scientific">Geobacter sp. (strain M21)</name>
    <dbReference type="NCBI Taxonomy" id="443144"/>
    <lineage>
        <taxon>Bacteria</taxon>
        <taxon>Pseudomonadati</taxon>
        <taxon>Thermodesulfobacteriota</taxon>
        <taxon>Desulfuromonadia</taxon>
        <taxon>Geobacterales</taxon>
        <taxon>Geobacteraceae</taxon>
        <taxon>Geobacter</taxon>
    </lineage>
</organism>
<keyword id="KW-0067">ATP-binding</keyword>
<keyword id="KW-0963">Cytoplasm</keyword>
<keyword id="KW-0227">DNA damage</keyword>
<keyword id="KW-0234">DNA repair</keyword>
<keyword id="KW-0235">DNA replication</keyword>
<keyword id="KW-0238">DNA-binding</keyword>
<keyword id="KW-0547">Nucleotide-binding</keyword>
<keyword id="KW-0742">SOS response</keyword>
<comment type="function">
    <text evidence="1">The RecF protein is involved in DNA metabolism; it is required for DNA replication and normal SOS inducibility. RecF binds preferentially to single-stranded, linear DNA. It also seems to bind ATP.</text>
</comment>
<comment type="subcellular location">
    <subcellularLocation>
        <location evidence="1">Cytoplasm</location>
    </subcellularLocation>
</comment>
<comment type="similarity">
    <text evidence="1">Belongs to the RecF family.</text>
</comment>
<accession>C6E7Q7</accession>
<gene>
    <name evidence="1" type="primary">recF</name>
    <name type="ordered locus">GM21_0003</name>
</gene>
<protein>
    <recommendedName>
        <fullName evidence="1">DNA replication and repair protein RecF</fullName>
    </recommendedName>
</protein>
<proteinExistence type="inferred from homology"/>
<dbReference type="EMBL" id="CP001661">
    <property type="protein sequence ID" value="ACT16090.1"/>
    <property type="molecule type" value="Genomic_DNA"/>
</dbReference>
<dbReference type="SMR" id="C6E7Q7"/>
<dbReference type="STRING" id="443144.GM21_0003"/>
<dbReference type="KEGG" id="gem:GM21_0003"/>
<dbReference type="eggNOG" id="COG1195">
    <property type="taxonomic scope" value="Bacteria"/>
</dbReference>
<dbReference type="HOGENOM" id="CLU_040267_0_1_7"/>
<dbReference type="OrthoDB" id="9803889at2"/>
<dbReference type="GO" id="GO:0005737">
    <property type="term" value="C:cytoplasm"/>
    <property type="evidence" value="ECO:0007669"/>
    <property type="project" value="UniProtKB-SubCell"/>
</dbReference>
<dbReference type="GO" id="GO:0005524">
    <property type="term" value="F:ATP binding"/>
    <property type="evidence" value="ECO:0007669"/>
    <property type="project" value="UniProtKB-UniRule"/>
</dbReference>
<dbReference type="GO" id="GO:0003697">
    <property type="term" value="F:single-stranded DNA binding"/>
    <property type="evidence" value="ECO:0007669"/>
    <property type="project" value="UniProtKB-UniRule"/>
</dbReference>
<dbReference type="GO" id="GO:0006260">
    <property type="term" value="P:DNA replication"/>
    <property type="evidence" value="ECO:0007669"/>
    <property type="project" value="UniProtKB-UniRule"/>
</dbReference>
<dbReference type="GO" id="GO:0000731">
    <property type="term" value="P:DNA synthesis involved in DNA repair"/>
    <property type="evidence" value="ECO:0007669"/>
    <property type="project" value="TreeGrafter"/>
</dbReference>
<dbReference type="GO" id="GO:0006302">
    <property type="term" value="P:double-strand break repair"/>
    <property type="evidence" value="ECO:0007669"/>
    <property type="project" value="TreeGrafter"/>
</dbReference>
<dbReference type="GO" id="GO:0009432">
    <property type="term" value="P:SOS response"/>
    <property type="evidence" value="ECO:0007669"/>
    <property type="project" value="UniProtKB-UniRule"/>
</dbReference>
<dbReference type="Gene3D" id="3.40.50.300">
    <property type="entry name" value="P-loop containing nucleotide triphosphate hydrolases"/>
    <property type="match status" value="1"/>
</dbReference>
<dbReference type="Gene3D" id="1.20.1050.90">
    <property type="entry name" value="RecF/RecN/SMC, N-terminal domain"/>
    <property type="match status" value="1"/>
</dbReference>
<dbReference type="HAMAP" id="MF_00365">
    <property type="entry name" value="RecF"/>
    <property type="match status" value="1"/>
</dbReference>
<dbReference type="InterPro" id="IPR001238">
    <property type="entry name" value="DNA-binding_RecF"/>
</dbReference>
<dbReference type="InterPro" id="IPR027417">
    <property type="entry name" value="P-loop_NTPase"/>
</dbReference>
<dbReference type="InterPro" id="IPR003395">
    <property type="entry name" value="RecF/RecN/SMC_N"/>
</dbReference>
<dbReference type="InterPro" id="IPR042174">
    <property type="entry name" value="RecF_2"/>
</dbReference>
<dbReference type="NCBIfam" id="TIGR00611">
    <property type="entry name" value="recf"/>
    <property type="match status" value="1"/>
</dbReference>
<dbReference type="PANTHER" id="PTHR32182">
    <property type="entry name" value="DNA REPLICATION AND REPAIR PROTEIN RECF"/>
    <property type="match status" value="1"/>
</dbReference>
<dbReference type="PANTHER" id="PTHR32182:SF0">
    <property type="entry name" value="DNA REPLICATION AND REPAIR PROTEIN RECF"/>
    <property type="match status" value="1"/>
</dbReference>
<dbReference type="Pfam" id="PF02463">
    <property type="entry name" value="SMC_N"/>
    <property type="match status" value="1"/>
</dbReference>
<dbReference type="SUPFAM" id="SSF52540">
    <property type="entry name" value="P-loop containing nucleoside triphosphate hydrolases"/>
    <property type="match status" value="1"/>
</dbReference>
<reference key="1">
    <citation type="submission" date="2009-07" db="EMBL/GenBank/DDBJ databases">
        <title>Complete sequence of Geobacter sp. M21.</title>
        <authorList>
            <consortium name="US DOE Joint Genome Institute"/>
            <person name="Lucas S."/>
            <person name="Copeland A."/>
            <person name="Lapidus A."/>
            <person name="Glavina del Rio T."/>
            <person name="Dalin E."/>
            <person name="Tice H."/>
            <person name="Bruce D."/>
            <person name="Goodwin L."/>
            <person name="Pitluck S."/>
            <person name="Saunders E."/>
            <person name="Brettin T."/>
            <person name="Detter J.C."/>
            <person name="Han C."/>
            <person name="Larimer F."/>
            <person name="Land M."/>
            <person name="Hauser L."/>
            <person name="Kyrpides N."/>
            <person name="Ovchinnikova G."/>
            <person name="Lovley D."/>
        </authorList>
    </citation>
    <scope>NUCLEOTIDE SEQUENCE [LARGE SCALE GENOMIC DNA]</scope>
    <source>
        <strain>M21</strain>
    </source>
</reference>
<sequence>MKLIKLKLASFRNLQNIELAPGKKFNVFYGNNGQGKTNLLESIYLLATMKSFKQARNAELIAFGGEFALVKGTVERDQVRREIAVLIEKQGKKAKVDAKLMTRLDDFFGNLNVVLFTPEEISMVRGGPDLRRRYLDRAVFTCDLGYLTAYHDYAKILKNRNALLKVNETAGIEVWTEQLVQAALLVIERRKAYLDRIGRLLQGFYSEISGNDETVQIEYRLHGVDARLFAEDPAEALNQALRAHAAEERRRGSTAIGPHRDDLYFGLNGRGARQFASQGQQRSFVLALKMAEIEHITRCFEAPPVLLLDDMTSELDRERNRNLMEFLKKREMQVFITTTSLHNVDVDELQDNRTFRIKEGKILD</sequence>
<name>RECF_GEOSM</name>